<gene>
    <name evidence="1" type="primary">fmt</name>
    <name type="ordered locus">YPN_3828</name>
    <name type="ORF">YP516_4350</name>
</gene>
<evidence type="ECO:0000255" key="1">
    <source>
        <dbReference type="HAMAP-Rule" id="MF_00182"/>
    </source>
</evidence>
<proteinExistence type="inferred from homology"/>
<reference key="1">
    <citation type="journal article" date="2006" name="J. Bacteriol.">
        <title>Complete genome sequence of Yersinia pestis strains Antiqua and Nepal516: evidence of gene reduction in an emerging pathogen.</title>
        <authorList>
            <person name="Chain P.S.G."/>
            <person name="Hu P."/>
            <person name="Malfatti S.A."/>
            <person name="Radnedge L."/>
            <person name="Larimer F."/>
            <person name="Vergez L.M."/>
            <person name="Worsham P."/>
            <person name="Chu M.C."/>
            <person name="Andersen G.L."/>
        </authorList>
    </citation>
    <scope>NUCLEOTIDE SEQUENCE [LARGE SCALE GENOMIC DNA]</scope>
    <source>
        <strain>Nepal516</strain>
    </source>
</reference>
<reference key="2">
    <citation type="submission" date="2009-04" db="EMBL/GenBank/DDBJ databases">
        <title>Yersinia pestis Nepal516A whole genome shotgun sequencing project.</title>
        <authorList>
            <person name="Plunkett G. III"/>
            <person name="Anderson B.D."/>
            <person name="Baumler D.J."/>
            <person name="Burland V."/>
            <person name="Cabot E.L."/>
            <person name="Glasner J.D."/>
            <person name="Mau B."/>
            <person name="Neeno-Eckwall E."/>
            <person name="Perna N.T."/>
            <person name="Munk A.C."/>
            <person name="Tapia R."/>
            <person name="Green L.D."/>
            <person name="Rogers Y.C."/>
            <person name="Detter J.C."/>
            <person name="Bruce D.C."/>
            <person name="Brettin T.S."/>
        </authorList>
    </citation>
    <scope>NUCLEOTIDE SEQUENCE [LARGE SCALE GENOMIC DNA]</scope>
    <source>
        <strain>Nepal516</strain>
    </source>
</reference>
<keyword id="KW-0648">Protein biosynthesis</keyword>
<keyword id="KW-0808">Transferase</keyword>
<dbReference type="EC" id="2.1.2.9" evidence="1"/>
<dbReference type="EMBL" id="CP000305">
    <property type="protein sequence ID" value="ABG20155.1"/>
    <property type="molecule type" value="Genomic_DNA"/>
</dbReference>
<dbReference type="EMBL" id="ACNQ01000019">
    <property type="protein sequence ID" value="EEO74742.1"/>
    <property type="molecule type" value="Genomic_DNA"/>
</dbReference>
<dbReference type="RefSeq" id="WP_002209020.1">
    <property type="nucleotide sequence ID" value="NZ_ACNQ01000019.1"/>
</dbReference>
<dbReference type="SMR" id="Q1CCX5"/>
<dbReference type="GeneID" id="57974363"/>
<dbReference type="KEGG" id="ypn:YPN_3828"/>
<dbReference type="HOGENOM" id="CLU_033347_1_2_6"/>
<dbReference type="Proteomes" id="UP000008936">
    <property type="component" value="Chromosome"/>
</dbReference>
<dbReference type="GO" id="GO:0005829">
    <property type="term" value="C:cytosol"/>
    <property type="evidence" value="ECO:0007669"/>
    <property type="project" value="TreeGrafter"/>
</dbReference>
<dbReference type="GO" id="GO:0004479">
    <property type="term" value="F:methionyl-tRNA formyltransferase activity"/>
    <property type="evidence" value="ECO:0007669"/>
    <property type="project" value="UniProtKB-UniRule"/>
</dbReference>
<dbReference type="CDD" id="cd08646">
    <property type="entry name" value="FMT_core_Met-tRNA-FMT_N"/>
    <property type="match status" value="1"/>
</dbReference>
<dbReference type="CDD" id="cd08704">
    <property type="entry name" value="Met_tRNA_FMT_C"/>
    <property type="match status" value="1"/>
</dbReference>
<dbReference type="FunFam" id="3.10.25.10:FF:000001">
    <property type="entry name" value="Methionyl-tRNA formyltransferase"/>
    <property type="match status" value="1"/>
</dbReference>
<dbReference type="FunFam" id="3.40.50.12230:FF:000001">
    <property type="entry name" value="Methionyl-tRNA formyltransferase"/>
    <property type="match status" value="1"/>
</dbReference>
<dbReference type="FunFam" id="3.40.50.170:FF:000003">
    <property type="entry name" value="Methionyl-tRNA formyltransferase"/>
    <property type="match status" value="1"/>
</dbReference>
<dbReference type="Gene3D" id="3.10.25.10">
    <property type="entry name" value="Formyl transferase, C-terminal domain"/>
    <property type="match status" value="1"/>
</dbReference>
<dbReference type="Gene3D" id="3.40.50.170">
    <property type="entry name" value="Formyl transferase, N-terminal domain"/>
    <property type="match status" value="1"/>
</dbReference>
<dbReference type="HAMAP" id="MF_00182">
    <property type="entry name" value="Formyl_trans"/>
    <property type="match status" value="1"/>
</dbReference>
<dbReference type="InterPro" id="IPR005794">
    <property type="entry name" value="Fmt"/>
</dbReference>
<dbReference type="InterPro" id="IPR005793">
    <property type="entry name" value="Formyl_trans_C"/>
</dbReference>
<dbReference type="InterPro" id="IPR037022">
    <property type="entry name" value="Formyl_trans_C_sf"/>
</dbReference>
<dbReference type="InterPro" id="IPR002376">
    <property type="entry name" value="Formyl_transf_N"/>
</dbReference>
<dbReference type="InterPro" id="IPR036477">
    <property type="entry name" value="Formyl_transf_N_sf"/>
</dbReference>
<dbReference type="InterPro" id="IPR011034">
    <property type="entry name" value="Formyl_transferase-like_C_sf"/>
</dbReference>
<dbReference type="InterPro" id="IPR001555">
    <property type="entry name" value="GART_AS"/>
</dbReference>
<dbReference type="InterPro" id="IPR044135">
    <property type="entry name" value="Met-tRNA-FMT_C"/>
</dbReference>
<dbReference type="InterPro" id="IPR041711">
    <property type="entry name" value="Met-tRNA-FMT_N"/>
</dbReference>
<dbReference type="NCBIfam" id="TIGR00460">
    <property type="entry name" value="fmt"/>
    <property type="match status" value="1"/>
</dbReference>
<dbReference type="PANTHER" id="PTHR11138">
    <property type="entry name" value="METHIONYL-TRNA FORMYLTRANSFERASE"/>
    <property type="match status" value="1"/>
</dbReference>
<dbReference type="PANTHER" id="PTHR11138:SF5">
    <property type="entry name" value="METHIONYL-TRNA FORMYLTRANSFERASE, MITOCHONDRIAL"/>
    <property type="match status" value="1"/>
</dbReference>
<dbReference type="Pfam" id="PF02911">
    <property type="entry name" value="Formyl_trans_C"/>
    <property type="match status" value="1"/>
</dbReference>
<dbReference type="Pfam" id="PF00551">
    <property type="entry name" value="Formyl_trans_N"/>
    <property type="match status" value="1"/>
</dbReference>
<dbReference type="SUPFAM" id="SSF50486">
    <property type="entry name" value="FMT C-terminal domain-like"/>
    <property type="match status" value="1"/>
</dbReference>
<dbReference type="SUPFAM" id="SSF53328">
    <property type="entry name" value="Formyltransferase"/>
    <property type="match status" value="1"/>
</dbReference>
<dbReference type="PROSITE" id="PS00373">
    <property type="entry name" value="GART"/>
    <property type="match status" value="1"/>
</dbReference>
<accession>Q1CCX5</accession>
<accession>D1Q2I9</accession>
<comment type="function">
    <text evidence="1">Attaches a formyl group to the free amino group of methionyl-tRNA(fMet). The formyl group appears to play a dual role in the initiator identity of N-formylmethionyl-tRNA by promoting its recognition by IF2 and preventing the misappropriation of this tRNA by the elongation apparatus.</text>
</comment>
<comment type="catalytic activity">
    <reaction evidence="1">
        <text>L-methionyl-tRNA(fMet) + (6R)-10-formyltetrahydrofolate = N-formyl-L-methionyl-tRNA(fMet) + (6S)-5,6,7,8-tetrahydrofolate + H(+)</text>
        <dbReference type="Rhea" id="RHEA:24380"/>
        <dbReference type="Rhea" id="RHEA-COMP:9952"/>
        <dbReference type="Rhea" id="RHEA-COMP:9953"/>
        <dbReference type="ChEBI" id="CHEBI:15378"/>
        <dbReference type="ChEBI" id="CHEBI:57453"/>
        <dbReference type="ChEBI" id="CHEBI:78530"/>
        <dbReference type="ChEBI" id="CHEBI:78844"/>
        <dbReference type="ChEBI" id="CHEBI:195366"/>
        <dbReference type="EC" id="2.1.2.9"/>
    </reaction>
</comment>
<comment type="similarity">
    <text evidence="1">Belongs to the Fmt family.</text>
</comment>
<feature type="chain" id="PRO_1000020208" description="Methionyl-tRNA formyltransferase">
    <location>
        <begin position="1"/>
        <end position="315"/>
    </location>
</feature>
<feature type="binding site" evidence="1">
    <location>
        <begin position="113"/>
        <end position="116"/>
    </location>
    <ligand>
        <name>(6S)-5,6,7,8-tetrahydrofolate</name>
        <dbReference type="ChEBI" id="CHEBI:57453"/>
    </ligand>
</feature>
<name>FMT_YERPN</name>
<protein>
    <recommendedName>
        <fullName evidence="1">Methionyl-tRNA formyltransferase</fullName>
        <ecNumber evidence="1">2.1.2.9</ecNumber>
    </recommendedName>
</protein>
<organism>
    <name type="scientific">Yersinia pestis bv. Antiqua (strain Nepal516)</name>
    <dbReference type="NCBI Taxonomy" id="377628"/>
    <lineage>
        <taxon>Bacteria</taxon>
        <taxon>Pseudomonadati</taxon>
        <taxon>Pseudomonadota</taxon>
        <taxon>Gammaproteobacteria</taxon>
        <taxon>Enterobacterales</taxon>
        <taxon>Yersiniaceae</taxon>
        <taxon>Yersinia</taxon>
    </lineage>
</organism>
<sequence>MSDSLRIIFAGTPDFAARHLGALLSSQHKIVGVFTQPDRPAGRGNKLTPSPVKILAEHHGIPVFQPKSLRPEENQHLVADLNADIMVVVAYGLILPAAVLAMPRLGCINVHGSLLPRWRGAAPIQRSVWAGDEKTGITIMQMDIGLDTGAMLHKIECAIQPEDTSATLYDKLAQLGPQGLLITLQQLAAGTALAEVQNETQATYAEKLSKEEAKLDWTLSATQLERCIRAFNPWPVSYFIVDEQPIKVWQAQVLPAGEDAEPGTIIHADKHGIQVATADGVLNITQLQPAGKKAMSAADLLNSRREWFIPGSQLV</sequence>